<proteinExistence type="inferred from homology"/>
<dbReference type="EC" id="5.1.1.3" evidence="1"/>
<dbReference type="EMBL" id="CP000961">
    <property type="protein sequence ID" value="ACA88959.1"/>
    <property type="molecule type" value="Genomic_DNA"/>
</dbReference>
<dbReference type="RefSeq" id="WP_012327277.1">
    <property type="nucleotide sequence ID" value="NC_010506.1"/>
</dbReference>
<dbReference type="SMR" id="B1KN02"/>
<dbReference type="STRING" id="392500.Swoo_4709"/>
<dbReference type="KEGG" id="swd:Swoo_4709"/>
<dbReference type="eggNOG" id="COG0796">
    <property type="taxonomic scope" value="Bacteria"/>
</dbReference>
<dbReference type="HOGENOM" id="CLU_052344_2_0_6"/>
<dbReference type="UniPathway" id="UPA00219"/>
<dbReference type="Proteomes" id="UP000002168">
    <property type="component" value="Chromosome"/>
</dbReference>
<dbReference type="GO" id="GO:0008881">
    <property type="term" value="F:glutamate racemase activity"/>
    <property type="evidence" value="ECO:0007669"/>
    <property type="project" value="UniProtKB-UniRule"/>
</dbReference>
<dbReference type="GO" id="GO:0071555">
    <property type="term" value="P:cell wall organization"/>
    <property type="evidence" value="ECO:0007669"/>
    <property type="project" value="UniProtKB-KW"/>
</dbReference>
<dbReference type="GO" id="GO:0009252">
    <property type="term" value="P:peptidoglycan biosynthetic process"/>
    <property type="evidence" value="ECO:0007669"/>
    <property type="project" value="UniProtKB-UniRule"/>
</dbReference>
<dbReference type="GO" id="GO:0008360">
    <property type="term" value="P:regulation of cell shape"/>
    <property type="evidence" value="ECO:0007669"/>
    <property type="project" value="UniProtKB-KW"/>
</dbReference>
<dbReference type="FunFam" id="3.40.50.1860:FF:000001">
    <property type="entry name" value="Glutamate racemase"/>
    <property type="match status" value="1"/>
</dbReference>
<dbReference type="Gene3D" id="3.40.50.1860">
    <property type="match status" value="2"/>
</dbReference>
<dbReference type="HAMAP" id="MF_00258">
    <property type="entry name" value="Glu_racemase"/>
    <property type="match status" value="1"/>
</dbReference>
<dbReference type="InterPro" id="IPR015942">
    <property type="entry name" value="Asp/Glu/hydantoin_racemase"/>
</dbReference>
<dbReference type="InterPro" id="IPR001920">
    <property type="entry name" value="Asp/Glu_race"/>
</dbReference>
<dbReference type="InterPro" id="IPR018187">
    <property type="entry name" value="Asp/Glu_racemase_AS_1"/>
</dbReference>
<dbReference type="InterPro" id="IPR033134">
    <property type="entry name" value="Asp/Glu_racemase_AS_2"/>
</dbReference>
<dbReference type="InterPro" id="IPR004391">
    <property type="entry name" value="Glu_race"/>
</dbReference>
<dbReference type="NCBIfam" id="TIGR00067">
    <property type="entry name" value="glut_race"/>
    <property type="match status" value="1"/>
</dbReference>
<dbReference type="PANTHER" id="PTHR21198">
    <property type="entry name" value="GLUTAMATE RACEMASE"/>
    <property type="match status" value="1"/>
</dbReference>
<dbReference type="PANTHER" id="PTHR21198:SF2">
    <property type="entry name" value="GLUTAMATE RACEMASE"/>
    <property type="match status" value="1"/>
</dbReference>
<dbReference type="Pfam" id="PF01177">
    <property type="entry name" value="Asp_Glu_race"/>
    <property type="match status" value="1"/>
</dbReference>
<dbReference type="SUPFAM" id="SSF53681">
    <property type="entry name" value="Aspartate/glutamate racemase"/>
    <property type="match status" value="2"/>
</dbReference>
<dbReference type="PROSITE" id="PS00923">
    <property type="entry name" value="ASP_GLU_RACEMASE_1"/>
    <property type="match status" value="1"/>
</dbReference>
<dbReference type="PROSITE" id="PS00924">
    <property type="entry name" value="ASP_GLU_RACEMASE_2"/>
    <property type="match status" value="1"/>
</dbReference>
<keyword id="KW-0133">Cell shape</keyword>
<keyword id="KW-0961">Cell wall biogenesis/degradation</keyword>
<keyword id="KW-0413">Isomerase</keyword>
<keyword id="KW-0573">Peptidoglycan synthesis</keyword>
<keyword id="KW-1185">Reference proteome</keyword>
<comment type="function">
    <text evidence="1">Provides the (R)-glutamate required for cell wall biosynthesis.</text>
</comment>
<comment type="catalytic activity">
    <reaction evidence="1">
        <text>L-glutamate = D-glutamate</text>
        <dbReference type="Rhea" id="RHEA:12813"/>
        <dbReference type="ChEBI" id="CHEBI:29985"/>
        <dbReference type="ChEBI" id="CHEBI:29986"/>
        <dbReference type="EC" id="5.1.1.3"/>
    </reaction>
</comment>
<comment type="pathway">
    <text evidence="1">Cell wall biogenesis; peptidoglycan biosynthesis.</text>
</comment>
<comment type="similarity">
    <text evidence="1">Belongs to the aspartate/glutamate racemases family.</text>
</comment>
<organism>
    <name type="scientific">Shewanella woodyi (strain ATCC 51908 / MS32)</name>
    <dbReference type="NCBI Taxonomy" id="392500"/>
    <lineage>
        <taxon>Bacteria</taxon>
        <taxon>Pseudomonadati</taxon>
        <taxon>Pseudomonadota</taxon>
        <taxon>Gammaproteobacteria</taxon>
        <taxon>Alteromonadales</taxon>
        <taxon>Shewanellaceae</taxon>
        <taxon>Shewanella</taxon>
    </lineage>
</organism>
<accession>B1KN02</accession>
<name>MURI_SHEWM</name>
<protein>
    <recommendedName>
        <fullName evidence="1">Glutamate racemase</fullName>
        <ecNumber evidence="1">5.1.1.3</ecNumber>
    </recommendedName>
</protein>
<reference key="1">
    <citation type="submission" date="2008-02" db="EMBL/GenBank/DDBJ databases">
        <title>Complete sequence of Shewanella woodyi ATCC 51908.</title>
        <authorList>
            <consortium name="US DOE Joint Genome Institute"/>
            <person name="Copeland A."/>
            <person name="Lucas S."/>
            <person name="Lapidus A."/>
            <person name="Glavina del Rio T."/>
            <person name="Dalin E."/>
            <person name="Tice H."/>
            <person name="Bruce D."/>
            <person name="Goodwin L."/>
            <person name="Pitluck S."/>
            <person name="Sims D."/>
            <person name="Brettin T."/>
            <person name="Detter J.C."/>
            <person name="Han C."/>
            <person name="Kuske C.R."/>
            <person name="Schmutz J."/>
            <person name="Larimer F."/>
            <person name="Land M."/>
            <person name="Hauser L."/>
            <person name="Kyrpides N."/>
            <person name="Lykidis A."/>
            <person name="Zhao J.-S."/>
            <person name="Richardson P."/>
        </authorList>
    </citation>
    <scope>NUCLEOTIDE SEQUENCE [LARGE SCALE GENOMIC DNA]</scope>
    <source>
        <strain>ATCC 51908 / MS32</strain>
    </source>
</reference>
<evidence type="ECO:0000255" key="1">
    <source>
        <dbReference type="HAMAP-Rule" id="MF_00258"/>
    </source>
</evidence>
<sequence>MSGPILVFDSGVGGLSILDEIRRVLPDQNYCYLFDNARLPYGELEEQELIDGCEALITATVAQLGASLVVIACNTASTLVLPVLREALTIPVVGVVPAIKPAALYSQAKHIGLLATPGTIKRSYTHSLIQEFAANCQVELYGSSELVLLAERKASGKQILQGEIAQLLSPIKVSGIDTLVLGCTHFPILKDEIQQYLGDGVLLLDSGKAVAARVSTLIKEESTLNKRQRKGHSKEMIALYTSEVGEGLKKLLAEFGFSTYSKAQTG</sequence>
<feature type="chain" id="PRO_1000114064" description="Glutamate racemase">
    <location>
        <begin position="1"/>
        <end position="266"/>
    </location>
</feature>
<feature type="active site" description="Proton donor/acceptor" evidence="1">
    <location>
        <position position="73"/>
    </location>
</feature>
<feature type="active site" description="Proton donor/acceptor" evidence="1">
    <location>
        <position position="183"/>
    </location>
</feature>
<feature type="binding site" evidence="1">
    <location>
        <begin position="9"/>
        <end position="10"/>
    </location>
    <ligand>
        <name>substrate</name>
    </ligand>
</feature>
<feature type="binding site" evidence="1">
    <location>
        <begin position="41"/>
        <end position="42"/>
    </location>
    <ligand>
        <name>substrate</name>
    </ligand>
</feature>
<feature type="binding site" evidence="1">
    <location>
        <begin position="74"/>
        <end position="75"/>
    </location>
    <ligand>
        <name>substrate</name>
    </ligand>
</feature>
<feature type="binding site" evidence="1">
    <location>
        <begin position="184"/>
        <end position="185"/>
    </location>
    <ligand>
        <name>substrate</name>
    </ligand>
</feature>
<gene>
    <name evidence="1" type="primary">murI</name>
    <name type="ordered locus">Swoo_4709</name>
</gene>